<protein>
    <recommendedName>
        <fullName evidence="1">Small ribosomal subunit protein uS17</fullName>
    </recommendedName>
    <alternativeName>
        <fullName evidence="2">30S ribosomal protein S17</fullName>
    </alternativeName>
</protein>
<name>RS17_METKA</name>
<comment type="function">
    <text evidence="1">One of the primary rRNA binding proteins, it binds specifically to the 5'-end of 16S ribosomal RNA.</text>
</comment>
<comment type="subunit">
    <text evidence="1">Part of the 30S ribosomal subunit.</text>
</comment>
<comment type="similarity">
    <text evidence="1">Belongs to the universal ribosomal protein uS17 family.</text>
</comment>
<accession>Q8TW21</accession>
<gene>
    <name evidence="1" type="primary">rps17</name>
    <name type="synonym">rpsQ</name>
    <name type="ordered locus">MK1217</name>
</gene>
<organism>
    <name type="scientific">Methanopyrus kandleri (strain AV19 / DSM 6324 / JCM 9639 / NBRC 100938)</name>
    <dbReference type="NCBI Taxonomy" id="190192"/>
    <lineage>
        <taxon>Archaea</taxon>
        <taxon>Methanobacteriati</taxon>
        <taxon>Methanobacteriota</taxon>
        <taxon>Methanomada group</taxon>
        <taxon>Methanopyri</taxon>
        <taxon>Methanopyrales</taxon>
        <taxon>Methanopyraceae</taxon>
        <taxon>Methanopyrus</taxon>
    </lineage>
</organism>
<feature type="chain" id="PRO_0000232608" description="Small ribosomal subunit protein uS17">
    <location>
        <begin position="1"/>
        <end position="118"/>
    </location>
</feature>
<sequence>MTGEYRMAKDIGLGVKPPRRECDDPNCPFHGNLRVRGMILEGVVVSDRMDKTVIVEREYYRYDRKYERWERRRSRIPAHNPPCIDAQEGDKVRIAECRPLSKTKSFVVIEVLERAQER</sequence>
<evidence type="ECO:0000255" key="1">
    <source>
        <dbReference type="HAMAP-Rule" id="MF_01345"/>
    </source>
</evidence>
<evidence type="ECO:0000305" key="2"/>
<proteinExistence type="inferred from homology"/>
<keyword id="KW-1185">Reference proteome</keyword>
<keyword id="KW-0687">Ribonucleoprotein</keyword>
<keyword id="KW-0689">Ribosomal protein</keyword>
<keyword id="KW-0694">RNA-binding</keyword>
<keyword id="KW-0699">rRNA-binding</keyword>
<dbReference type="EMBL" id="AE009439">
    <property type="protein sequence ID" value="AAM02430.1"/>
    <property type="molecule type" value="Genomic_DNA"/>
</dbReference>
<dbReference type="SMR" id="Q8TW21"/>
<dbReference type="FunCoup" id="Q8TW21">
    <property type="interactions" value="140"/>
</dbReference>
<dbReference type="STRING" id="190192.MK1217"/>
<dbReference type="PaxDb" id="190192-MK1217"/>
<dbReference type="EnsemblBacteria" id="AAM02430">
    <property type="protein sequence ID" value="AAM02430"/>
    <property type="gene ID" value="MK1217"/>
</dbReference>
<dbReference type="KEGG" id="mka:MK1217"/>
<dbReference type="PATRIC" id="fig|190192.8.peg.1320"/>
<dbReference type="HOGENOM" id="CLU_073626_0_3_2"/>
<dbReference type="InParanoid" id="Q8TW21"/>
<dbReference type="Proteomes" id="UP000001826">
    <property type="component" value="Chromosome"/>
</dbReference>
<dbReference type="GO" id="GO:0022627">
    <property type="term" value="C:cytosolic small ribosomal subunit"/>
    <property type="evidence" value="ECO:0007669"/>
    <property type="project" value="TreeGrafter"/>
</dbReference>
<dbReference type="GO" id="GO:0019843">
    <property type="term" value="F:rRNA binding"/>
    <property type="evidence" value="ECO:0007669"/>
    <property type="project" value="UniProtKB-UniRule"/>
</dbReference>
<dbReference type="GO" id="GO:0003735">
    <property type="term" value="F:structural constituent of ribosome"/>
    <property type="evidence" value="ECO:0007669"/>
    <property type="project" value="InterPro"/>
</dbReference>
<dbReference type="GO" id="GO:0006412">
    <property type="term" value="P:translation"/>
    <property type="evidence" value="ECO:0007669"/>
    <property type="project" value="UniProtKB-UniRule"/>
</dbReference>
<dbReference type="CDD" id="cd00364">
    <property type="entry name" value="Ribosomal_uS17"/>
    <property type="match status" value="1"/>
</dbReference>
<dbReference type="FunFam" id="2.40.50.1000:FF:000005">
    <property type="entry name" value="30S ribosomal protein S17"/>
    <property type="match status" value="1"/>
</dbReference>
<dbReference type="Gene3D" id="2.40.50.1000">
    <property type="match status" value="1"/>
</dbReference>
<dbReference type="HAMAP" id="MF_01345_A">
    <property type="entry name" value="Ribosomal_uS17_A"/>
    <property type="match status" value="1"/>
</dbReference>
<dbReference type="InterPro" id="IPR012340">
    <property type="entry name" value="NA-bd_OB-fold"/>
</dbReference>
<dbReference type="InterPro" id="IPR000266">
    <property type="entry name" value="Ribosomal_uS17"/>
</dbReference>
<dbReference type="InterPro" id="IPR028333">
    <property type="entry name" value="Ribosomal_uS17_arc/euk"/>
</dbReference>
<dbReference type="InterPro" id="IPR019978">
    <property type="entry name" value="Ribosomal_uS17_archaeal"/>
</dbReference>
<dbReference type="InterPro" id="IPR019979">
    <property type="entry name" value="Ribosomal_uS17_CS"/>
</dbReference>
<dbReference type="NCBIfam" id="NF006345">
    <property type="entry name" value="PRK08572.1"/>
    <property type="match status" value="1"/>
</dbReference>
<dbReference type="NCBIfam" id="TIGR03630">
    <property type="entry name" value="uS17_arch"/>
    <property type="match status" value="1"/>
</dbReference>
<dbReference type="PANTHER" id="PTHR10744">
    <property type="entry name" value="40S RIBOSOMAL PROTEIN S11 FAMILY MEMBER"/>
    <property type="match status" value="1"/>
</dbReference>
<dbReference type="PANTHER" id="PTHR10744:SF9">
    <property type="entry name" value="40S RIBOSOMAL PROTEIN S11-RELATED"/>
    <property type="match status" value="1"/>
</dbReference>
<dbReference type="Pfam" id="PF00366">
    <property type="entry name" value="Ribosomal_S17"/>
    <property type="match status" value="1"/>
</dbReference>
<dbReference type="PRINTS" id="PR00973">
    <property type="entry name" value="RIBOSOMALS17"/>
</dbReference>
<dbReference type="SUPFAM" id="SSF50249">
    <property type="entry name" value="Nucleic acid-binding proteins"/>
    <property type="match status" value="1"/>
</dbReference>
<dbReference type="PROSITE" id="PS00056">
    <property type="entry name" value="RIBOSOMAL_S17"/>
    <property type="match status" value="1"/>
</dbReference>
<reference key="1">
    <citation type="journal article" date="2002" name="Proc. Natl. Acad. Sci. U.S.A.">
        <title>The complete genome of hyperthermophile Methanopyrus kandleri AV19 and monophyly of archaeal methanogens.</title>
        <authorList>
            <person name="Slesarev A.I."/>
            <person name="Mezhevaya K.V."/>
            <person name="Makarova K.S."/>
            <person name="Polushin N.N."/>
            <person name="Shcherbinina O.V."/>
            <person name="Shakhova V.V."/>
            <person name="Belova G.I."/>
            <person name="Aravind L."/>
            <person name="Natale D.A."/>
            <person name="Rogozin I.B."/>
            <person name="Tatusov R.L."/>
            <person name="Wolf Y.I."/>
            <person name="Stetter K.O."/>
            <person name="Malykh A.G."/>
            <person name="Koonin E.V."/>
            <person name="Kozyavkin S.A."/>
        </authorList>
    </citation>
    <scope>NUCLEOTIDE SEQUENCE [LARGE SCALE GENOMIC DNA]</scope>
    <source>
        <strain>AV19 / DSM 6324 / JCM 9639 / NBRC 100938</strain>
    </source>
</reference>